<reference key="1">
    <citation type="journal article" date="2002" name="J. Bacteriol.">
        <title>Whole-genome comparison of Mycobacterium tuberculosis clinical and laboratory strains.</title>
        <authorList>
            <person name="Fleischmann R.D."/>
            <person name="Alland D."/>
            <person name="Eisen J.A."/>
            <person name="Carpenter L."/>
            <person name="White O."/>
            <person name="Peterson J.D."/>
            <person name="DeBoy R.T."/>
            <person name="Dodson R.J."/>
            <person name="Gwinn M.L."/>
            <person name="Haft D.H."/>
            <person name="Hickey E.K."/>
            <person name="Kolonay J.F."/>
            <person name="Nelson W.C."/>
            <person name="Umayam L.A."/>
            <person name="Ermolaeva M.D."/>
            <person name="Salzberg S.L."/>
            <person name="Delcher A."/>
            <person name="Utterback T.R."/>
            <person name="Weidman J.F."/>
            <person name="Khouri H.M."/>
            <person name="Gill J."/>
            <person name="Mikula A."/>
            <person name="Bishai W."/>
            <person name="Jacobs W.R. Jr."/>
            <person name="Venter J.C."/>
            <person name="Fraser C.M."/>
        </authorList>
    </citation>
    <scope>NUCLEOTIDE SEQUENCE [LARGE SCALE GENOMIC DNA]</scope>
    <source>
        <strain>CDC 1551 / Oshkosh</strain>
    </source>
</reference>
<gene>
    <name type="primary">php</name>
    <name type="ordered locus">MT0240</name>
</gene>
<dbReference type="EMBL" id="AE000516">
    <property type="protein sequence ID" value="AAK44461.1"/>
    <property type="status" value="ALT_INIT"/>
    <property type="molecule type" value="Genomic_DNA"/>
</dbReference>
<dbReference type="PIR" id="D70962">
    <property type="entry name" value="D70962"/>
</dbReference>
<dbReference type="RefSeq" id="WP_003900835.1">
    <property type="nucleotide sequence ID" value="NZ_KK341227.1"/>
</dbReference>
<dbReference type="SMR" id="P9WHN8"/>
<dbReference type="KEGG" id="mtc:MT0240"/>
<dbReference type="PATRIC" id="fig|83331.31.peg.261"/>
<dbReference type="HOGENOM" id="CLU_054760_1_0_11"/>
<dbReference type="Proteomes" id="UP000001020">
    <property type="component" value="Chromosome"/>
</dbReference>
<dbReference type="GO" id="GO:0016788">
    <property type="term" value="F:hydrolase activity, acting on ester bonds"/>
    <property type="evidence" value="ECO:0007669"/>
    <property type="project" value="InterPro"/>
</dbReference>
<dbReference type="GO" id="GO:0008270">
    <property type="term" value="F:zinc ion binding"/>
    <property type="evidence" value="ECO:0007669"/>
    <property type="project" value="InterPro"/>
</dbReference>
<dbReference type="GO" id="GO:0009056">
    <property type="term" value="P:catabolic process"/>
    <property type="evidence" value="ECO:0007669"/>
    <property type="project" value="InterPro"/>
</dbReference>
<dbReference type="CDD" id="cd00530">
    <property type="entry name" value="PTE"/>
    <property type="match status" value="1"/>
</dbReference>
<dbReference type="Gene3D" id="3.20.20.140">
    <property type="entry name" value="Metal-dependent hydrolases"/>
    <property type="match status" value="1"/>
</dbReference>
<dbReference type="InterPro" id="IPR017947">
    <property type="entry name" value="AryldialkylPase_Zn-BS"/>
</dbReference>
<dbReference type="InterPro" id="IPR032466">
    <property type="entry name" value="Metal_Hydrolase"/>
</dbReference>
<dbReference type="InterPro" id="IPR001559">
    <property type="entry name" value="Phosphotriesterase"/>
</dbReference>
<dbReference type="PANTHER" id="PTHR10819">
    <property type="entry name" value="PHOSPHOTRIESTERASE-RELATED"/>
    <property type="match status" value="1"/>
</dbReference>
<dbReference type="PANTHER" id="PTHR10819:SF3">
    <property type="entry name" value="PHOSPHOTRIESTERASE-RELATED PROTEIN"/>
    <property type="match status" value="1"/>
</dbReference>
<dbReference type="Pfam" id="PF02126">
    <property type="entry name" value="PTE"/>
    <property type="match status" value="1"/>
</dbReference>
<dbReference type="SUPFAM" id="SSF51556">
    <property type="entry name" value="Metallo-dependent hydrolases"/>
    <property type="match status" value="1"/>
</dbReference>
<dbReference type="PROSITE" id="PS01322">
    <property type="entry name" value="PHOSPHOTRIESTERASE_1"/>
    <property type="match status" value="1"/>
</dbReference>
<dbReference type="PROSITE" id="PS51347">
    <property type="entry name" value="PHOSPHOTRIESTERASE_2"/>
    <property type="match status" value="1"/>
</dbReference>
<accession>P9WHN8</accession>
<accession>L0T4R7</accession>
<accession>P96413</accession>
<evidence type="ECO:0000255" key="1">
    <source>
        <dbReference type="PROSITE-ProRule" id="PRU00679"/>
    </source>
</evidence>
<evidence type="ECO:0000305" key="2"/>
<feature type="chain" id="PRO_0000428152" description="Phosphotriesterase homology protein">
    <location>
        <begin position="1"/>
        <end position="326"/>
    </location>
</feature>
<feature type="binding site" evidence="1">
    <location>
        <position position="22"/>
    </location>
    <ligand>
        <name>Zn(2+)</name>
        <dbReference type="ChEBI" id="CHEBI:29105"/>
        <label>1</label>
    </ligand>
</feature>
<feature type="binding site" evidence="1">
    <location>
        <position position="24"/>
    </location>
    <ligand>
        <name>Zn(2+)</name>
        <dbReference type="ChEBI" id="CHEBI:29105"/>
        <label>1</label>
    </ligand>
</feature>
<feature type="binding site" description="via carbamate group" evidence="1">
    <location>
        <position position="145"/>
    </location>
    <ligand>
        <name>Zn(2+)</name>
        <dbReference type="ChEBI" id="CHEBI:29105"/>
        <label>1</label>
    </ligand>
</feature>
<feature type="binding site" description="via carbamate group" evidence="1">
    <location>
        <position position="145"/>
    </location>
    <ligand>
        <name>Zn(2+)</name>
        <dbReference type="ChEBI" id="CHEBI:29105"/>
        <label>2</label>
    </ligand>
</feature>
<feature type="binding site" evidence="1">
    <location>
        <position position="178"/>
    </location>
    <ligand>
        <name>Zn(2+)</name>
        <dbReference type="ChEBI" id="CHEBI:29105"/>
        <label>2</label>
    </ligand>
</feature>
<feature type="binding site" evidence="1">
    <location>
        <position position="207"/>
    </location>
    <ligand>
        <name>Zn(2+)</name>
        <dbReference type="ChEBI" id="CHEBI:29105"/>
        <label>2</label>
    </ligand>
</feature>
<feature type="binding site" evidence="1">
    <location>
        <position position="264"/>
    </location>
    <ligand>
        <name>Zn(2+)</name>
        <dbReference type="ChEBI" id="CHEBI:29105"/>
        <label>1</label>
    </ligand>
</feature>
<feature type="modified residue" description="N6-carboxylysine" evidence="1">
    <location>
        <position position="145"/>
    </location>
</feature>
<organism>
    <name type="scientific">Mycobacterium tuberculosis (strain CDC 1551 / Oshkosh)</name>
    <dbReference type="NCBI Taxonomy" id="83331"/>
    <lineage>
        <taxon>Bacteria</taxon>
        <taxon>Bacillati</taxon>
        <taxon>Actinomycetota</taxon>
        <taxon>Actinomycetes</taxon>
        <taxon>Mycobacteriales</taxon>
        <taxon>Mycobacteriaceae</taxon>
        <taxon>Mycobacterium</taxon>
        <taxon>Mycobacterium tuberculosis complex</taxon>
    </lineage>
</organism>
<keyword id="KW-0378">Hydrolase</keyword>
<keyword id="KW-0479">Metal-binding</keyword>
<keyword id="KW-1185">Reference proteome</keyword>
<keyword id="KW-0862">Zinc</keyword>
<sequence>MPELNTARGPIDTADLGVTLMHEHVFIMTTEIAQNYPEAWGDEDKRVAGAIARLGELKARGVDTIVDLTVIGLGRYIPRIARVAAATELNIVVATGLYTYNDVPFYFHYLGPGAQLDGPEIMTDMFVRDIEHGIADTGIKAGILKCATDEPGLTPGVERVLRAVAQAHKRTGAPISTHTHAGLRRGLDQQRIFAEEGVDLSRVVIGHCGDSTDVGYLEELIAAGSYLGMDRFGVDVISPFQDRVNIVARMCERGHADKMVLSHDACCYFDALPEELVPVAMPNWHYLHIHNDVIPALKQHGVTDEQLHTMLVDNPRRIFERQGGYQ</sequence>
<comment type="cofactor">
    <cofactor evidence="1">
        <name>Zn(2+)</name>
        <dbReference type="ChEBI" id="CHEBI:29105"/>
    </cofactor>
    <text evidence="1">Binds 2 Zn(2+) ions per subunit.</text>
</comment>
<comment type="similarity">
    <text evidence="1">Belongs to the metallo-dependent hydrolases superfamily. Phosphotriesterase family.</text>
</comment>
<comment type="sequence caution" evidence="2">
    <conflict type="erroneous initiation">
        <sequence resource="EMBL-CDS" id="AAK44461"/>
    </conflict>
    <text>Extended N-terminus.</text>
</comment>
<proteinExistence type="inferred from homology"/>
<protein>
    <recommendedName>
        <fullName>Phosphotriesterase homology protein</fullName>
    </recommendedName>
</protein>
<name>PHP_MYCTO</name>